<feature type="chain" id="PRO_0000136444" description="Histidine biosynthesis bifunctional protein HisIE">
    <location>
        <begin position="1"/>
        <end position="205"/>
    </location>
</feature>
<feature type="region of interest" description="Phosphoribosyl-AMP cyclohydrolase">
    <location>
        <begin position="1"/>
        <end position="115"/>
    </location>
</feature>
<feature type="region of interest" description="Phosphoribosyl-ATP pyrophosphohydrolase">
    <location>
        <begin position="116"/>
        <end position="205"/>
    </location>
</feature>
<comment type="catalytic activity">
    <reaction evidence="1">
        <text>1-(5-phospho-beta-D-ribosyl)-ATP + H2O = 1-(5-phospho-beta-D-ribosyl)-5'-AMP + diphosphate + H(+)</text>
        <dbReference type="Rhea" id="RHEA:22828"/>
        <dbReference type="ChEBI" id="CHEBI:15377"/>
        <dbReference type="ChEBI" id="CHEBI:15378"/>
        <dbReference type="ChEBI" id="CHEBI:33019"/>
        <dbReference type="ChEBI" id="CHEBI:59457"/>
        <dbReference type="ChEBI" id="CHEBI:73183"/>
        <dbReference type="EC" id="3.6.1.31"/>
    </reaction>
</comment>
<comment type="catalytic activity">
    <reaction evidence="1">
        <text>1-(5-phospho-beta-D-ribosyl)-5'-AMP + H2O = 1-(5-phospho-beta-D-ribosyl)-5-[(5-phospho-beta-D-ribosylamino)methylideneamino]imidazole-4-carboxamide</text>
        <dbReference type="Rhea" id="RHEA:20049"/>
        <dbReference type="ChEBI" id="CHEBI:15377"/>
        <dbReference type="ChEBI" id="CHEBI:58435"/>
        <dbReference type="ChEBI" id="CHEBI:59457"/>
        <dbReference type="EC" id="3.5.4.19"/>
    </reaction>
</comment>
<comment type="pathway">
    <text evidence="1">Amino-acid biosynthesis; L-histidine biosynthesis; L-histidine from 5-phospho-alpha-D-ribose 1-diphosphate: step 2/9.</text>
</comment>
<comment type="pathway">
    <text evidence="1">Amino-acid biosynthesis; L-histidine biosynthesis; L-histidine from 5-phospho-alpha-D-ribose 1-diphosphate: step 3/9.</text>
</comment>
<comment type="subcellular location">
    <subcellularLocation>
        <location evidence="1">Cytoplasm</location>
    </subcellularLocation>
</comment>
<comment type="similarity">
    <text evidence="1">In the N-terminal section; belongs to the PRA-CH family.</text>
</comment>
<comment type="similarity">
    <text evidence="1">In the C-terminal section; belongs to the PRA-PH family.</text>
</comment>
<accession>Q8R886</accession>
<keyword id="KW-0028">Amino-acid biosynthesis</keyword>
<keyword id="KW-0067">ATP-binding</keyword>
<keyword id="KW-0963">Cytoplasm</keyword>
<keyword id="KW-0368">Histidine biosynthesis</keyword>
<keyword id="KW-0378">Hydrolase</keyword>
<keyword id="KW-0511">Multifunctional enzyme</keyword>
<keyword id="KW-0547">Nucleotide-binding</keyword>
<keyword id="KW-1185">Reference proteome</keyword>
<sequence>MIDIKELKFDEKGLIPAIVQDYYTKQVLMLAYMNEESLKLTLEKGETYFFSRSRGKIWHKGETSGNTQKVKKIFYDCDEDALLIQVEAKGPACHTGNISCFYRSFDEETEDGIEILNKLYERIKGRKINPVEGSYTNYLFEKGIDKILKKVGEEATEVVIASKNDSKDEIVYEVSDLIYHLMVLLVEKNITLNDIYNELERRYKK</sequence>
<proteinExistence type="inferred from homology"/>
<name>HIS2_CALS4</name>
<gene>
    <name evidence="1" type="primary">hisI</name>
    <name evidence="1" type="synonym">hisIE</name>
    <name type="ordered locus">TTE2132</name>
</gene>
<evidence type="ECO:0000255" key="1">
    <source>
        <dbReference type="HAMAP-Rule" id="MF_01019"/>
    </source>
</evidence>
<organism>
    <name type="scientific">Caldanaerobacter subterraneus subsp. tengcongensis (strain DSM 15242 / JCM 11007 / NBRC 100824 / MB4)</name>
    <name type="common">Thermoanaerobacter tengcongensis</name>
    <dbReference type="NCBI Taxonomy" id="273068"/>
    <lineage>
        <taxon>Bacteria</taxon>
        <taxon>Bacillati</taxon>
        <taxon>Bacillota</taxon>
        <taxon>Clostridia</taxon>
        <taxon>Thermoanaerobacterales</taxon>
        <taxon>Thermoanaerobacteraceae</taxon>
        <taxon>Caldanaerobacter</taxon>
    </lineage>
</organism>
<reference key="1">
    <citation type="journal article" date="2002" name="Genome Res.">
        <title>A complete sequence of the T. tengcongensis genome.</title>
        <authorList>
            <person name="Bao Q."/>
            <person name="Tian Y."/>
            <person name="Li W."/>
            <person name="Xu Z."/>
            <person name="Xuan Z."/>
            <person name="Hu S."/>
            <person name="Dong W."/>
            <person name="Yang J."/>
            <person name="Chen Y."/>
            <person name="Xue Y."/>
            <person name="Xu Y."/>
            <person name="Lai X."/>
            <person name="Huang L."/>
            <person name="Dong X."/>
            <person name="Ma Y."/>
            <person name="Ling L."/>
            <person name="Tan H."/>
            <person name="Chen R."/>
            <person name="Wang J."/>
            <person name="Yu J."/>
            <person name="Yang H."/>
        </authorList>
    </citation>
    <scope>NUCLEOTIDE SEQUENCE [LARGE SCALE GENOMIC DNA]</scope>
    <source>
        <strain>DSM 15242 / JCM 11007 / NBRC 100824 / MB4</strain>
    </source>
</reference>
<protein>
    <recommendedName>
        <fullName evidence="1">Histidine biosynthesis bifunctional protein HisIE</fullName>
    </recommendedName>
    <domain>
        <recommendedName>
            <fullName evidence="1">Phosphoribosyl-AMP cyclohydrolase</fullName>
            <shortName evidence="1">PRA-CH</shortName>
            <ecNumber evidence="1">3.5.4.19</ecNumber>
        </recommendedName>
    </domain>
    <domain>
        <recommendedName>
            <fullName evidence="1">Phosphoribosyl-ATP pyrophosphatase</fullName>
            <shortName evidence="1">PRA-PH</shortName>
            <ecNumber evidence="1">3.6.1.31</ecNumber>
        </recommendedName>
    </domain>
</protein>
<dbReference type="EC" id="3.5.4.19" evidence="1"/>
<dbReference type="EC" id="3.6.1.31" evidence="1"/>
<dbReference type="EMBL" id="AE008691">
    <property type="protein sequence ID" value="AAM25297.1"/>
    <property type="molecule type" value="Genomic_DNA"/>
</dbReference>
<dbReference type="RefSeq" id="WP_011026233.1">
    <property type="nucleotide sequence ID" value="NZ_JANUCV010000001.1"/>
</dbReference>
<dbReference type="SMR" id="Q8R886"/>
<dbReference type="STRING" id="273068.TTE2132"/>
<dbReference type="KEGG" id="tte:TTE2132"/>
<dbReference type="eggNOG" id="COG0139">
    <property type="taxonomic scope" value="Bacteria"/>
</dbReference>
<dbReference type="eggNOG" id="COG0140">
    <property type="taxonomic scope" value="Bacteria"/>
</dbReference>
<dbReference type="HOGENOM" id="CLU_048577_3_1_9"/>
<dbReference type="OrthoDB" id="9795769at2"/>
<dbReference type="UniPathway" id="UPA00031">
    <property type="reaction ID" value="UER00007"/>
</dbReference>
<dbReference type="UniPathway" id="UPA00031">
    <property type="reaction ID" value="UER00008"/>
</dbReference>
<dbReference type="Proteomes" id="UP000000555">
    <property type="component" value="Chromosome"/>
</dbReference>
<dbReference type="GO" id="GO:0005737">
    <property type="term" value="C:cytoplasm"/>
    <property type="evidence" value="ECO:0007669"/>
    <property type="project" value="UniProtKB-SubCell"/>
</dbReference>
<dbReference type="GO" id="GO:0005524">
    <property type="term" value="F:ATP binding"/>
    <property type="evidence" value="ECO:0007669"/>
    <property type="project" value="UniProtKB-KW"/>
</dbReference>
<dbReference type="GO" id="GO:0004635">
    <property type="term" value="F:phosphoribosyl-AMP cyclohydrolase activity"/>
    <property type="evidence" value="ECO:0007669"/>
    <property type="project" value="UniProtKB-UniRule"/>
</dbReference>
<dbReference type="GO" id="GO:0004636">
    <property type="term" value="F:phosphoribosyl-ATP diphosphatase activity"/>
    <property type="evidence" value="ECO:0007669"/>
    <property type="project" value="UniProtKB-UniRule"/>
</dbReference>
<dbReference type="GO" id="GO:0000105">
    <property type="term" value="P:L-histidine biosynthetic process"/>
    <property type="evidence" value="ECO:0007669"/>
    <property type="project" value="UniProtKB-UniRule"/>
</dbReference>
<dbReference type="CDD" id="cd11534">
    <property type="entry name" value="NTP-PPase_HisIE_like"/>
    <property type="match status" value="1"/>
</dbReference>
<dbReference type="FunFam" id="1.10.287.1080:FF:000002">
    <property type="entry name" value="Histidine biosynthesis bifunctional protein HisIE"/>
    <property type="match status" value="1"/>
</dbReference>
<dbReference type="FunFam" id="3.10.20.810:FF:000001">
    <property type="entry name" value="Histidine biosynthesis bifunctional protein HisIE"/>
    <property type="match status" value="1"/>
</dbReference>
<dbReference type="Gene3D" id="1.10.287.1080">
    <property type="entry name" value="MazG-like"/>
    <property type="match status" value="1"/>
</dbReference>
<dbReference type="Gene3D" id="3.10.20.810">
    <property type="entry name" value="Phosphoribosyl-AMP cyclohydrolase"/>
    <property type="match status" value="1"/>
</dbReference>
<dbReference type="HAMAP" id="MF_01020">
    <property type="entry name" value="HisE"/>
    <property type="match status" value="1"/>
</dbReference>
<dbReference type="HAMAP" id="MF_01021">
    <property type="entry name" value="HisI"/>
    <property type="match status" value="1"/>
</dbReference>
<dbReference type="HAMAP" id="MF_01019">
    <property type="entry name" value="HisIE"/>
    <property type="match status" value="1"/>
</dbReference>
<dbReference type="InterPro" id="IPR023019">
    <property type="entry name" value="His_synth_HisIE"/>
</dbReference>
<dbReference type="InterPro" id="IPR008179">
    <property type="entry name" value="HisE"/>
</dbReference>
<dbReference type="InterPro" id="IPR026660">
    <property type="entry name" value="PRA-CH"/>
</dbReference>
<dbReference type="InterPro" id="IPR021130">
    <property type="entry name" value="PRib-ATP_PPHydrolase-like"/>
</dbReference>
<dbReference type="InterPro" id="IPR002496">
    <property type="entry name" value="PRib_AMP_CycHydrolase_dom"/>
</dbReference>
<dbReference type="InterPro" id="IPR038019">
    <property type="entry name" value="PRib_AMP_CycHydrolase_sf"/>
</dbReference>
<dbReference type="NCBIfam" id="TIGR03188">
    <property type="entry name" value="histidine_hisI"/>
    <property type="match status" value="1"/>
</dbReference>
<dbReference type="NCBIfam" id="NF000768">
    <property type="entry name" value="PRK00051.1"/>
    <property type="match status" value="1"/>
</dbReference>
<dbReference type="NCBIfam" id="NF001611">
    <property type="entry name" value="PRK00400.1-3"/>
    <property type="match status" value="1"/>
</dbReference>
<dbReference type="NCBIfam" id="NF002747">
    <property type="entry name" value="PRK02759.1"/>
    <property type="match status" value="1"/>
</dbReference>
<dbReference type="PANTHER" id="PTHR42945">
    <property type="entry name" value="HISTIDINE BIOSYNTHESIS BIFUNCTIONAL PROTEIN"/>
    <property type="match status" value="1"/>
</dbReference>
<dbReference type="PANTHER" id="PTHR42945:SF9">
    <property type="entry name" value="HISTIDINE BIOSYNTHESIS BIFUNCTIONAL PROTEIN HISIE"/>
    <property type="match status" value="1"/>
</dbReference>
<dbReference type="Pfam" id="PF01502">
    <property type="entry name" value="PRA-CH"/>
    <property type="match status" value="1"/>
</dbReference>
<dbReference type="Pfam" id="PF01503">
    <property type="entry name" value="PRA-PH"/>
    <property type="match status" value="1"/>
</dbReference>
<dbReference type="SUPFAM" id="SSF101386">
    <property type="entry name" value="all-alpha NTP pyrophosphatases"/>
    <property type="match status" value="1"/>
</dbReference>
<dbReference type="SUPFAM" id="SSF141734">
    <property type="entry name" value="HisI-like"/>
    <property type="match status" value="1"/>
</dbReference>